<proteinExistence type="inferred from homology"/>
<accession>O35038</accession>
<name>YTLI_BACSU</name>
<sequence>MELRSIKTFHTIVKFGSFYKAAEILNYSQPTISMRMKQLEQDLGVLLFERGKSLQLTKAGKLFYERTGDLLMQYEALKHNLSDLKEEEAGIINIGVSEPTASLIFPEILKDFLMDYPKITVNIKVDDANTCSQKLLDGTIDFAVCGEPELILENYYHPFFYDTLNVIVSDQHPLAEKKAVHLSDLAEERFIFTPANCPIRLQIEQHLHRELGNRYKKMELTSSMSHEYYVRENIGISIFTSTAHSKPFNGTKVIPILNLDITPPIGLLTNQKEVHFDRATKDLIARITKRFQQRSKELEGTSDKTITG</sequence>
<reference key="1">
    <citation type="journal article" date="1997" name="Microbiology">
        <title>Sequencing and functional annotation of the Bacillus subtilis genes in the 200 kb rrnB-dnaB region.</title>
        <authorList>
            <person name="Lapidus A."/>
            <person name="Galleron N."/>
            <person name="Sorokin A."/>
            <person name="Ehrlich S.D."/>
        </authorList>
    </citation>
    <scope>NUCLEOTIDE SEQUENCE [GENOMIC DNA]</scope>
    <source>
        <strain>168</strain>
    </source>
</reference>
<reference key="2">
    <citation type="journal article" date="1997" name="Nature">
        <title>The complete genome sequence of the Gram-positive bacterium Bacillus subtilis.</title>
        <authorList>
            <person name="Kunst F."/>
            <person name="Ogasawara N."/>
            <person name="Moszer I."/>
            <person name="Albertini A.M."/>
            <person name="Alloni G."/>
            <person name="Azevedo V."/>
            <person name="Bertero M.G."/>
            <person name="Bessieres P."/>
            <person name="Bolotin A."/>
            <person name="Borchert S."/>
            <person name="Borriss R."/>
            <person name="Boursier L."/>
            <person name="Brans A."/>
            <person name="Braun M."/>
            <person name="Brignell S.C."/>
            <person name="Bron S."/>
            <person name="Brouillet S."/>
            <person name="Bruschi C.V."/>
            <person name="Caldwell B."/>
            <person name="Capuano V."/>
            <person name="Carter N.M."/>
            <person name="Choi S.-K."/>
            <person name="Codani J.-J."/>
            <person name="Connerton I.F."/>
            <person name="Cummings N.J."/>
            <person name="Daniel R.A."/>
            <person name="Denizot F."/>
            <person name="Devine K.M."/>
            <person name="Duesterhoeft A."/>
            <person name="Ehrlich S.D."/>
            <person name="Emmerson P.T."/>
            <person name="Entian K.-D."/>
            <person name="Errington J."/>
            <person name="Fabret C."/>
            <person name="Ferrari E."/>
            <person name="Foulger D."/>
            <person name="Fritz C."/>
            <person name="Fujita M."/>
            <person name="Fujita Y."/>
            <person name="Fuma S."/>
            <person name="Galizzi A."/>
            <person name="Galleron N."/>
            <person name="Ghim S.-Y."/>
            <person name="Glaser P."/>
            <person name="Goffeau A."/>
            <person name="Golightly E.J."/>
            <person name="Grandi G."/>
            <person name="Guiseppi G."/>
            <person name="Guy B.J."/>
            <person name="Haga K."/>
            <person name="Haiech J."/>
            <person name="Harwood C.R."/>
            <person name="Henaut A."/>
            <person name="Hilbert H."/>
            <person name="Holsappel S."/>
            <person name="Hosono S."/>
            <person name="Hullo M.-F."/>
            <person name="Itaya M."/>
            <person name="Jones L.-M."/>
            <person name="Joris B."/>
            <person name="Karamata D."/>
            <person name="Kasahara Y."/>
            <person name="Klaerr-Blanchard M."/>
            <person name="Klein C."/>
            <person name="Kobayashi Y."/>
            <person name="Koetter P."/>
            <person name="Koningstein G."/>
            <person name="Krogh S."/>
            <person name="Kumano M."/>
            <person name="Kurita K."/>
            <person name="Lapidus A."/>
            <person name="Lardinois S."/>
            <person name="Lauber J."/>
            <person name="Lazarevic V."/>
            <person name="Lee S.-M."/>
            <person name="Levine A."/>
            <person name="Liu H."/>
            <person name="Masuda S."/>
            <person name="Mauel C."/>
            <person name="Medigue C."/>
            <person name="Medina N."/>
            <person name="Mellado R.P."/>
            <person name="Mizuno M."/>
            <person name="Moestl D."/>
            <person name="Nakai S."/>
            <person name="Noback M."/>
            <person name="Noone D."/>
            <person name="O'Reilly M."/>
            <person name="Ogawa K."/>
            <person name="Ogiwara A."/>
            <person name="Oudega B."/>
            <person name="Park S.-H."/>
            <person name="Parro V."/>
            <person name="Pohl T.M."/>
            <person name="Portetelle D."/>
            <person name="Porwollik S."/>
            <person name="Prescott A.M."/>
            <person name="Presecan E."/>
            <person name="Pujic P."/>
            <person name="Purnelle B."/>
            <person name="Rapoport G."/>
            <person name="Rey M."/>
            <person name="Reynolds S."/>
            <person name="Rieger M."/>
            <person name="Rivolta C."/>
            <person name="Rocha E."/>
            <person name="Roche B."/>
            <person name="Rose M."/>
            <person name="Sadaie Y."/>
            <person name="Sato T."/>
            <person name="Scanlan E."/>
            <person name="Schleich S."/>
            <person name="Schroeter R."/>
            <person name="Scoffone F."/>
            <person name="Sekiguchi J."/>
            <person name="Sekowska A."/>
            <person name="Seror S.J."/>
            <person name="Serror P."/>
            <person name="Shin B.-S."/>
            <person name="Soldo B."/>
            <person name="Sorokin A."/>
            <person name="Tacconi E."/>
            <person name="Takagi T."/>
            <person name="Takahashi H."/>
            <person name="Takemaru K."/>
            <person name="Takeuchi M."/>
            <person name="Tamakoshi A."/>
            <person name="Tanaka T."/>
            <person name="Terpstra P."/>
            <person name="Tognoni A."/>
            <person name="Tosato V."/>
            <person name="Uchiyama S."/>
            <person name="Vandenbol M."/>
            <person name="Vannier F."/>
            <person name="Vassarotti A."/>
            <person name="Viari A."/>
            <person name="Wambutt R."/>
            <person name="Wedler E."/>
            <person name="Wedler H."/>
            <person name="Weitzenegger T."/>
            <person name="Winters P."/>
            <person name="Wipat A."/>
            <person name="Yamamoto H."/>
            <person name="Yamane K."/>
            <person name="Yasumoto K."/>
            <person name="Yata K."/>
            <person name="Yoshida K."/>
            <person name="Yoshikawa H.-F."/>
            <person name="Zumstein E."/>
            <person name="Yoshikawa H."/>
            <person name="Danchin A."/>
        </authorList>
    </citation>
    <scope>NUCLEOTIDE SEQUENCE [LARGE SCALE GENOMIC DNA]</scope>
    <source>
        <strain>168</strain>
    </source>
</reference>
<reference key="3">
    <citation type="journal article" date="2001" name="Microbiology">
        <title>Sulfur-limitation-regulated proteins in Bacillus subtilis: a two-dimensional gel electrophoresis study.</title>
        <authorList>
            <person name="Coppee J.Y."/>
            <person name="Auger S."/>
            <person name="Turlin E."/>
            <person name="Sekowska A."/>
            <person name="Le Caer J.-P."/>
            <person name="Labas V."/>
            <person name="Vagner V."/>
            <person name="Danchin A."/>
            <person name="Martin-Verstraete I."/>
        </authorList>
    </citation>
    <scope>FUNCTION</scope>
</reference>
<reference key="4">
    <citation type="journal article" date="2005" name="J. Bacteriol.">
        <title>Regulation of the Bacillus subtilis ytmI operon, involved in sulfur metabolism.</title>
        <authorList>
            <person name="Burguiere P."/>
            <person name="Fert J."/>
            <person name="Guillouard I."/>
            <person name="Auger S."/>
            <person name="Danchin A."/>
            <person name="Martin-Verstraete I."/>
        </authorList>
    </citation>
    <scope>FUNCTION</scope>
</reference>
<protein>
    <recommendedName>
        <fullName>HTH-type transcriptional regulator YtlI</fullName>
    </recommendedName>
</protein>
<dbReference type="EMBL" id="AF008220">
    <property type="protein sequence ID" value="AAC00402.1"/>
    <property type="molecule type" value="Genomic_DNA"/>
</dbReference>
<dbReference type="EMBL" id="AL009126">
    <property type="protein sequence ID" value="CAB14900.1"/>
    <property type="molecule type" value="Genomic_DNA"/>
</dbReference>
<dbReference type="PIR" id="E69995">
    <property type="entry name" value="E69995"/>
</dbReference>
<dbReference type="RefSeq" id="WP_004398915.1">
    <property type="nucleotide sequence ID" value="NZ_OZ025638.1"/>
</dbReference>
<dbReference type="SMR" id="O35038"/>
<dbReference type="FunCoup" id="O35038">
    <property type="interactions" value="21"/>
</dbReference>
<dbReference type="STRING" id="224308.BSU29400"/>
<dbReference type="PaxDb" id="224308-BSU29400"/>
<dbReference type="EnsemblBacteria" id="CAB14900">
    <property type="protein sequence ID" value="CAB14900"/>
    <property type="gene ID" value="BSU_29400"/>
</dbReference>
<dbReference type="GeneID" id="938452"/>
<dbReference type="KEGG" id="bsu:BSU29400"/>
<dbReference type="PATRIC" id="fig|224308.179.peg.3194"/>
<dbReference type="eggNOG" id="COG0583">
    <property type="taxonomic scope" value="Bacteria"/>
</dbReference>
<dbReference type="InParanoid" id="O35038"/>
<dbReference type="OrthoDB" id="9785745at2"/>
<dbReference type="PhylomeDB" id="O35038"/>
<dbReference type="BioCyc" id="BSUB:BSU29400-MONOMER"/>
<dbReference type="Proteomes" id="UP000001570">
    <property type="component" value="Chromosome"/>
</dbReference>
<dbReference type="GO" id="GO:0005829">
    <property type="term" value="C:cytosol"/>
    <property type="evidence" value="ECO:0000318"/>
    <property type="project" value="GO_Central"/>
</dbReference>
<dbReference type="GO" id="GO:0003700">
    <property type="term" value="F:DNA-binding transcription factor activity"/>
    <property type="evidence" value="ECO:0007669"/>
    <property type="project" value="InterPro"/>
</dbReference>
<dbReference type="GO" id="GO:0043565">
    <property type="term" value="F:sequence-specific DNA binding"/>
    <property type="evidence" value="ECO:0000318"/>
    <property type="project" value="GO_Central"/>
</dbReference>
<dbReference type="GO" id="GO:0006355">
    <property type="term" value="P:regulation of DNA-templated transcription"/>
    <property type="evidence" value="ECO:0000318"/>
    <property type="project" value="GO_Central"/>
</dbReference>
<dbReference type="CDD" id="cd05466">
    <property type="entry name" value="PBP2_LTTR_substrate"/>
    <property type="match status" value="1"/>
</dbReference>
<dbReference type="FunFam" id="1.10.10.10:FF:000001">
    <property type="entry name" value="LysR family transcriptional regulator"/>
    <property type="match status" value="1"/>
</dbReference>
<dbReference type="Gene3D" id="3.40.190.290">
    <property type="match status" value="1"/>
</dbReference>
<dbReference type="Gene3D" id="1.10.10.10">
    <property type="entry name" value="Winged helix-like DNA-binding domain superfamily/Winged helix DNA-binding domain"/>
    <property type="match status" value="1"/>
</dbReference>
<dbReference type="InterPro" id="IPR050950">
    <property type="entry name" value="HTH-type_LysR_regulators"/>
</dbReference>
<dbReference type="InterPro" id="IPR005119">
    <property type="entry name" value="LysR_subst-bd"/>
</dbReference>
<dbReference type="InterPro" id="IPR000847">
    <property type="entry name" value="Tscrpt_reg_HTH_LysR"/>
</dbReference>
<dbReference type="InterPro" id="IPR036388">
    <property type="entry name" value="WH-like_DNA-bd_sf"/>
</dbReference>
<dbReference type="InterPro" id="IPR036390">
    <property type="entry name" value="WH_DNA-bd_sf"/>
</dbReference>
<dbReference type="PANTHER" id="PTHR30419">
    <property type="entry name" value="HTH-TYPE TRANSCRIPTIONAL REGULATOR YBHD"/>
    <property type="match status" value="1"/>
</dbReference>
<dbReference type="PANTHER" id="PTHR30419:SF25">
    <property type="entry name" value="HTH-TYPE TRANSCRIPTIONAL REGULATOR YTLI"/>
    <property type="match status" value="1"/>
</dbReference>
<dbReference type="Pfam" id="PF00126">
    <property type="entry name" value="HTH_1"/>
    <property type="match status" value="1"/>
</dbReference>
<dbReference type="Pfam" id="PF03466">
    <property type="entry name" value="LysR_substrate"/>
    <property type="match status" value="1"/>
</dbReference>
<dbReference type="PRINTS" id="PR00039">
    <property type="entry name" value="HTHLYSR"/>
</dbReference>
<dbReference type="SUPFAM" id="SSF53850">
    <property type="entry name" value="Periplasmic binding protein-like II"/>
    <property type="match status" value="1"/>
</dbReference>
<dbReference type="SUPFAM" id="SSF46785">
    <property type="entry name" value="Winged helix' DNA-binding domain"/>
    <property type="match status" value="1"/>
</dbReference>
<dbReference type="PROSITE" id="PS50931">
    <property type="entry name" value="HTH_LYSR"/>
    <property type="match status" value="1"/>
</dbReference>
<feature type="chain" id="PRO_0000105820" description="HTH-type transcriptional regulator YtlI">
    <location>
        <begin position="1"/>
        <end position="308"/>
    </location>
</feature>
<feature type="domain" description="HTH lysR-type" evidence="1">
    <location>
        <begin position="1"/>
        <end position="57"/>
    </location>
</feature>
<feature type="DNA-binding region" description="H-T-H motif" evidence="1">
    <location>
        <begin position="18"/>
        <end position="37"/>
    </location>
</feature>
<comment type="function">
    <text evidence="2 3">Positively regulates the expression of ytmI operon in response to the availability of sulfur sources.</text>
</comment>
<comment type="similarity">
    <text evidence="4">Belongs to the LysR transcriptional regulatory family.</text>
</comment>
<organism>
    <name type="scientific">Bacillus subtilis (strain 168)</name>
    <dbReference type="NCBI Taxonomy" id="224308"/>
    <lineage>
        <taxon>Bacteria</taxon>
        <taxon>Bacillati</taxon>
        <taxon>Bacillota</taxon>
        <taxon>Bacilli</taxon>
        <taxon>Bacillales</taxon>
        <taxon>Bacillaceae</taxon>
        <taxon>Bacillus</taxon>
    </lineage>
</organism>
<gene>
    <name type="primary">ytlI</name>
    <name type="ordered locus">BSU29400</name>
</gene>
<evidence type="ECO:0000255" key="1">
    <source>
        <dbReference type="PROSITE-ProRule" id="PRU00253"/>
    </source>
</evidence>
<evidence type="ECO:0000269" key="2">
    <source>
    </source>
</evidence>
<evidence type="ECO:0000269" key="3">
    <source>
    </source>
</evidence>
<evidence type="ECO:0000305" key="4"/>
<keyword id="KW-0010">Activator</keyword>
<keyword id="KW-0238">DNA-binding</keyword>
<keyword id="KW-1185">Reference proteome</keyword>
<keyword id="KW-0804">Transcription</keyword>
<keyword id="KW-0805">Transcription regulation</keyword>